<name>ADDB_LATSS</name>
<reference key="1">
    <citation type="journal article" date="2005" name="Nat. Biotechnol.">
        <title>The complete genome sequence of the meat-borne lactic acid bacterium Lactobacillus sakei 23K.</title>
        <authorList>
            <person name="Chaillou S."/>
            <person name="Champomier-Verges M.-C."/>
            <person name="Cornet M."/>
            <person name="Crutz-Le Coq A.-M."/>
            <person name="Dudez A.-M."/>
            <person name="Martin V."/>
            <person name="Beaufils S."/>
            <person name="Darbon-Rongere E."/>
            <person name="Bossy R."/>
            <person name="Loux V."/>
            <person name="Zagorec M."/>
        </authorList>
    </citation>
    <scope>NUCLEOTIDE SEQUENCE [LARGE SCALE GENOMIC DNA]</scope>
    <source>
        <strain>23K</strain>
    </source>
</reference>
<feature type="chain" id="PRO_0000379378" description="ATP-dependent helicase/deoxyribonuclease subunit B">
    <location>
        <begin position="1"/>
        <end position="1186"/>
    </location>
</feature>
<evidence type="ECO:0000255" key="1">
    <source>
        <dbReference type="HAMAP-Rule" id="MF_01453"/>
    </source>
</evidence>
<proteinExistence type="inferred from homology"/>
<gene>
    <name evidence="1" type="primary">rexB</name>
    <name type="ordered locus">LCA_0909</name>
</gene>
<keyword id="KW-0067">ATP-binding</keyword>
<keyword id="KW-0227">DNA damage</keyword>
<keyword id="KW-0234">DNA repair</keyword>
<keyword id="KW-0238">DNA-binding</keyword>
<keyword id="KW-0269">Exonuclease</keyword>
<keyword id="KW-0347">Helicase</keyword>
<keyword id="KW-0378">Hydrolase</keyword>
<keyword id="KW-0540">Nuclease</keyword>
<keyword id="KW-0547">Nucleotide-binding</keyword>
<keyword id="KW-1185">Reference proteome</keyword>
<accession>Q38X70</accession>
<organism>
    <name type="scientific">Latilactobacillus sakei subsp. sakei (strain 23K)</name>
    <name type="common">Lactobacillus sakei subsp. sakei</name>
    <dbReference type="NCBI Taxonomy" id="314315"/>
    <lineage>
        <taxon>Bacteria</taxon>
        <taxon>Bacillati</taxon>
        <taxon>Bacillota</taxon>
        <taxon>Bacilli</taxon>
        <taxon>Lactobacillales</taxon>
        <taxon>Lactobacillaceae</taxon>
        <taxon>Latilactobacillus</taxon>
    </lineage>
</organism>
<protein>
    <recommendedName>
        <fullName evidence="1">ATP-dependent helicase/deoxyribonuclease subunit B</fullName>
        <ecNumber evidence="1">3.1.-.-</ecNumber>
    </recommendedName>
    <alternativeName>
        <fullName evidence="1">ATP-dependent helicase/nuclease subunit RexB</fullName>
    </alternativeName>
</protein>
<dbReference type="EC" id="3.1.-.-" evidence="1"/>
<dbReference type="EMBL" id="CR936503">
    <property type="protein sequence ID" value="CAI55211.1"/>
    <property type="molecule type" value="Genomic_DNA"/>
</dbReference>
<dbReference type="RefSeq" id="WP_011374611.1">
    <property type="nucleotide sequence ID" value="NC_007576.1"/>
</dbReference>
<dbReference type="SMR" id="Q38X70"/>
<dbReference type="STRING" id="314315.LCA_0909"/>
<dbReference type="KEGG" id="lsa:LCA_0909"/>
<dbReference type="eggNOG" id="COG3857">
    <property type="taxonomic scope" value="Bacteria"/>
</dbReference>
<dbReference type="HOGENOM" id="CLU_007838_0_0_9"/>
<dbReference type="OrthoDB" id="9758506at2"/>
<dbReference type="Proteomes" id="UP000002707">
    <property type="component" value="Chromosome"/>
</dbReference>
<dbReference type="GO" id="GO:0008409">
    <property type="term" value="F:5'-3' exonuclease activity"/>
    <property type="evidence" value="ECO:0007669"/>
    <property type="project" value="UniProtKB-UniRule"/>
</dbReference>
<dbReference type="GO" id="GO:0005524">
    <property type="term" value="F:ATP binding"/>
    <property type="evidence" value="ECO:0007669"/>
    <property type="project" value="UniProtKB-UniRule"/>
</dbReference>
<dbReference type="GO" id="GO:0003690">
    <property type="term" value="F:double-stranded DNA binding"/>
    <property type="evidence" value="ECO:0007669"/>
    <property type="project" value="UniProtKB-UniRule"/>
</dbReference>
<dbReference type="GO" id="GO:0004386">
    <property type="term" value="F:helicase activity"/>
    <property type="evidence" value="ECO:0007669"/>
    <property type="project" value="UniProtKB-KW"/>
</dbReference>
<dbReference type="GO" id="GO:0016817">
    <property type="term" value="F:hydrolase activity, acting on acid anhydrides"/>
    <property type="evidence" value="ECO:0007669"/>
    <property type="project" value="InterPro"/>
</dbReference>
<dbReference type="GO" id="GO:0000724">
    <property type="term" value="P:double-strand break repair via homologous recombination"/>
    <property type="evidence" value="ECO:0007669"/>
    <property type="project" value="UniProtKB-UniRule"/>
</dbReference>
<dbReference type="Gene3D" id="3.90.320.10">
    <property type="match status" value="1"/>
</dbReference>
<dbReference type="Gene3D" id="3.40.50.300">
    <property type="entry name" value="P-loop containing nucleotide triphosphate hydrolases"/>
    <property type="match status" value="3"/>
</dbReference>
<dbReference type="HAMAP" id="MF_01453">
    <property type="entry name" value="AddB_type2"/>
    <property type="match status" value="1"/>
</dbReference>
<dbReference type="InterPro" id="IPR049035">
    <property type="entry name" value="ADDB_N"/>
</dbReference>
<dbReference type="InterPro" id="IPR014141">
    <property type="entry name" value="DNA_helicase_suRexB"/>
</dbReference>
<dbReference type="InterPro" id="IPR027417">
    <property type="entry name" value="P-loop_NTPase"/>
</dbReference>
<dbReference type="InterPro" id="IPR011604">
    <property type="entry name" value="PDDEXK-like_dom_sf"/>
</dbReference>
<dbReference type="InterPro" id="IPR038726">
    <property type="entry name" value="PDDEXK_AddAB-type"/>
</dbReference>
<dbReference type="PANTHER" id="PTHR30591">
    <property type="entry name" value="RECBCD ENZYME SUBUNIT RECC"/>
    <property type="match status" value="1"/>
</dbReference>
<dbReference type="PANTHER" id="PTHR30591:SF1">
    <property type="entry name" value="RECBCD ENZYME SUBUNIT RECC"/>
    <property type="match status" value="1"/>
</dbReference>
<dbReference type="Pfam" id="PF21445">
    <property type="entry name" value="ADDB_N"/>
    <property type="match status" value="1"/>
</dbReference>
<dbReference type="Pfam" id="PF12705">
    <property type="entry name" value="PDDEXK_1"/>
    <property type="match status" value="1"/>
</dbReference>
<dbReference type="SUPFAM" id="SSF52540">
    <property type="entry name" value="P-loop containing nucleoside triphosphate hydrolases"/>
    <property type="match status" value="1"/>
</dbReference>
<comment type="function">
    <text evidence="1">The heterodimer acts as both an ATP-dependent DNA helicase and an ATP-dependent, dual-direction single-stranded exonuclease. Recognizes the chi site generating a DNA molecule suitable for the initiation of homologous recombination. This subunit has 5' -&gt; 3' nuclease activity but not helicase activity.</text>
</comment>
<comment type="cofactor">
    <cofactor evidence="1">
        <name>Mg(2+)</name>
        <dbReference type="ChEBI" id="CHEBI:18420"/>
    </cofactor>
</comment>
<comment type="subunit">
    <text evidence="1">Heterodimer of AddA and RexB.</text>
</comment>
<comment type="miscellaneous">
    <text evidence="1">Despite having helicase-like domains, this subunit does not have helicase activity.</text>
</comment>
<comment type="similarity">
    <text evidence="1">Belongs to the helicase family. AddB/RexB type 2 subfamily.</text>
</comment>
<sequence length="1186" mass="136081">MSLKFILGTASYDHHQALVTNLKATFQEKPQERYFYLVPNHIKFESEVSILEALKSDENDYVAASQIQVFSLTRLAWYFMKNTPYYQIPRISTAGLNMLVFRLLQEHQEQLQLFRGEVRHTGFVAQLTKQLLELKIGCITPADLTAMAENLGDQQVELAKKLHDLTIIATAFEAAMQKRFIENTALIDALTLFLQQQTLTDCHFYVEGFAQFTAQEQALLTTLMQQSEVQIGFILDRAYPNQQPDGLNFFFQAGRTYYNLYQQARLNHVPVMMDQMADSQRLTPALAALDQFWVSSESPGNRKLSPVPVADHLHVVAAENRYAELRYVAREIRRLVQTGHYRYRDFLILTRHLAPYQTMIAPILTEYEIPYFCDLPQTMAAHPLVSLLEKLLDVNLHFYRYEDVMALLKTELLIPKGMSIAEFRADLDLCENLILKNGYEGKDWLNDFDWQFYRFGSYQEGTRTTQDEALTERINGIRRYVQATLPPFYRALKAAKTGRQVVQVLYQFLIDHGVDRQLLHWRDQALAANQVAQAGQPEQTWSTFMQMLDEYVTLLGDVSFEEDNTEQLNEFKQLLSAGFAAAQYAQIPSTLDQVVLSESGMVQTKKRQITFMIGSTDQVMPDQIENTALLTDQDRQRLLDNEGQVTPLLNESSVGKMNAEPYLNYLAFLSSQTTVYFTYPLGNGEGTAFKISPYVERIRNHFDLTIQKIAAEQSLQSTETPQGSWRSLLSDLIQVSRQAQENQTLIPEQWLTTYRLLQQAPQSQFLTTQLFQSLNYRNEPERLTPEIVTGLYGNEIHTSISKLEEFYQNQYAYFLKYGLKLQERPVFELTPANTGNFYHEVMDRFIKLIQGQQIALPELDDQQIDKLVSEVLAKTYEQPEFKILNKTARMGYIRQQLMQTVKRVSLALRNQSLSTNLRPLATEVLFGQVGAEKGLQGLNFMLDDHREVKVRGKIDRIDQLTINNQPYLGIVDYKSSQHSFNFRDAYYGLALQMLTYLETVLQDQQAILPANSAVKPAGAFYLHLKNPTLTLKQLTKKKMGQLQKGEFDQMLLDQFKYNGLIVNDEELLENLDTTLVNGQSPLFAFSKLKSGKFSSKQLVTLNQLDLLMAHNEDLIKEAGQAIFAGDTALNPIMRPDRTNALTLSPFKSIFQFDAMLPENNYRQLEALDEKAVLERLMSKKGDGNLE</sequence>